<feature type="chain" id="PRO_1000135152" description="ATP-dependent Clp protease proteolytic subunit">
    <location>
        <begin position="1"/>
        <end position="194"/>
    </location>
</feature>
<feature type="active site" description="Nucleophile" evidence="1">
    <location>
        <position position="98"/>
    </location>
</feature>
<feature type="active site" evidence="1">
    <location>
        <position position="123"/>
    </location>
</feature>
<name>CLPP_CLOK1</name>
<comment type="function">
    <text evidence="1">Cleaves peptides in various proteins in a process that requires ATP hydrolysis. Has a chymotrypsin-like activity. Plays a major role in the degradation of misfolded proteins.</text>
</comment>
<comment type="catalytic activity">
    <reaction evidence="1">
        <text>Hydrolysis of proteins to small peptides in the presence of ATP and magnesium. alpha-casein is the usual test substrate. In the absence of ATP, only oligopeptides shorter than five residues are hydrolyzed (such as succinyl-Leu-Tyr-|-NHMec, and Leu-Tyr-Leu-|-Tyr-Trp, in which cleavage of the -Tyr-|-Leu- and -Tyr-|-Trp bonds also occurs).</text>
        <dbReference type="EC" id="3.4.21.92"/>
    </reaction>
</comment>
<comment type="subunit">
    <text evidence="1">Fourteen ClpP subunits assemble into 2 heptameric rings which stack back to back to give a disk-like structure with a central cavity, resembling the structure of eukaryotic proteasomes.</text>
</comment>
<comment type="subcellular location">
    <subcellularLocation>
        <location evidence="1">Cytoplasm</location>
    </subcellularLocation>
</comment>
<comment type="similarity">
    <text evidence="1">Belongs to the peptidase S14 family.</text>
</comment>
<reference key="1">
    <citation type="submission" date="2005-09" db="EMBL/GenBank/DDBJ databases">
        <title>Complete genome sequence of Clostridium kluyveri and comparative genomics of Clostridia species.</title>
        <authorList>
            <person name="Inui M."/>
            <person name="Nonaka H."/>
            <person name="Shinoda Y."/>
            <person name="Ikenaga Y."/>
            <person name="Abe M."/>
            <person name="Naito K."/>
            <person name="Vertes A.A."/>
            <person name="Yukawa H."/>
        </authorList>
    </citation>
    <scope>NUCLEOTIDE SEQUENCE [LARGE SCALE GENOMIC DNA]</scope>
    <source>
        <strain>NBRC 12016</strain>
    </source>
</reference>
<proteinExistence type="inferred from homology"/>
<sequence>MSLVPVVVEQTNRGERSYDIYSRLLKDRIVMLSEEVNDVTASLIVAQLLFLEAENPDKDIYFYINSPGGSITAGMAIYDTMQYIKSDVSTICIGMAASMGAFLLAAGEKGKRFALPNSEIMIHQPLGGFQGQATDIGIHADRILRIKKKLNAIISERTGQSIEKVEKDTERDNFMTAEEAKEYGLIDEVFTKKK</sequence>
<dbReference type="EC" id="3.4.21.92" evidence="1"/>
<dbReference type="EMBL" id="AP009049">
    <property type="protein sequence ID" value="BAH08010.1"/>
    <property type="molecule type" value="Genomic_DNA"/>
</dbReference>
<dbReference type="RefSeq" id="WP_012103684.1">
    <property type="nucleotide sequence ID" value="NC_011837.1"/>
</dbReference>
<dbReference type="SMR" id="B9E685"/>
<dbReference type="MEROPS" id="S14.001"/>
<dbReference type="KEGG" id="ckr:CKR_2959"/>
<dbReference type="HOGENOM" id="CLU_058707_3_2_9"/>
<dbReference type="Proteomes" id="UP000007969">
    <property type="component" value="Chromosome"/>
</dbReference>
<dbReference type="GO" id="GO:0005737">
    <property type="term" value="C:cytoplasm"/>
    <property type="evidence" value="ECO:0007669"/>
    <property type="project" value="UniProtKB-SubCell"/>
</dbReference>
<dbReference type="GO" id="GO:0009368">
    <property type="term" value="C:endopeptidase Clp complex"/>
    <property type="evidence" value="ECO:0007669"/>
    <property type="project" value="TreeGrafter"/>
</dbReference>
<dbReference type="GO" id="GO:0004176">
    <property type="term" value="F:ATP-dependent peptidase activity"/>
    <property type="evidence" value="ECO:0007669"/>
    <property type="project" value="InterPro"/>
</dbReference>
<dbReference type="GO" id="GO:0051117">
    <property type="term" value="F:ATPase binding"/>
    <property type="evidence" value="ECO:0007669"/>
    <property type="project" value="TreeGrafter"/>
</dbReference>
<dbReference type="GO" id="GO:0004252">
    <property type="term" value="F:serine-type endopeptidase activity"/>
    <property type="evidence" value="ECO:0007669"/>
    <property type="project" value="UniProtKB-UniRule"/>
</dbReference>
<dbReference type="GO" id="GO:0006515">
    <property type="term" value="P:protein quality control for misfolded or incompletely synthesized proteins"/>
    <property type="evidence" value="ECO:0007669"/>
    <property type="project" value="TreeGrafter"/>
</dbReference>
<dbReference type="CDD" id="cd07017">
    <property type="entry name" value="S14_ClpP_2"/>
    <property type="match status" value="1"/>
</dbReference>
<dbReference type="FunFam" id="3.90.226.10:FF:000001">
    <property type="entry name" value="ATP-dependent Clp protease proteolytic subunit"/>
    <property type="match status" value="1"/>
</dbReference>
<dbReference type="Gene3D" id="3.90.226.10">
    <property type="entry name" value="2-enoyl-CoA Hydratase, Chain A, domain 1"/>
    <property type="match status" value="1"/>
</dbReference>
<dbReference type="HAMAP" id="MF_00444">
    <property type="entry name" value="ClpP"/>
    <property type="match status" value="1"/>
</dbReference>
<dbReference type="InterPro" id="IPR001907">
    <property type="entry name" value="ClpP"/>
</dbReference>
<dbReference type="InterPro" id="IPR029045">
    <property type="entry name" value="ClpP/crotonase-like_dom_sf"/>
</dbReference>
<dbReference type="InterPro" id="IPR023562">
    <property type="entry name" value="ClpP/TepA"/>
</dbReference>
<dbReference type="InterPro" id="IPR033135">
    <property type="entry name" value="ClpP_His_AS"/>
</dbReference>
<dbReference type="InterPro" id="IPR018215">
    <property type="entry name" value="ClpP_Ser_AS"/>
</dbReference>
<dbReference type="NCBIfam" id="TIGR00493">
    <property type="entry name" value="clpP"/>
    <property type="match status" value="1"/>
</dbReference>
<dbReference type="NCBIfam" id="NF001368">
    <property type="entry name" value="PRK00277.1"/>
    <property type="match status" value="1"/>
</dbReference>
<dbReference type="NCBIfam" id="NF009205">
    <property type="entry name" value="PRK12553.1"/>
    <property type="match status" value="1"/>
</dbReference>
<dbReference type="PANTHER" id="PTHR10381">
    <property type="entry name" value="ATP-DEPENDENT CLP PROTEASE PROTEOLYTIC SUBUNIT"/>
    <property type="match status" value="1"/>
</dbReference>
<dbReference type="PANTHER" id="PTHR10381:SF70">
    <property type="entry name" value="ATP-DEPENDENT CLP PROTEASE PROTEOLYTIC SUBUNIT"/>
    <property type="match status" value="1"/>
</dbReference>
<dbReference type="Pfam" id="PF00574">
    <property type="entry name" value="CLP_protease"/>
    <property type="match status" value="1"/>
</dbReference>
<dbReference type="PRINTS" id="PR00127">
    <property type="entry name" value="CLPPROTEASEP"/>
</dbReference>
<dbReference type="SUPFAM" id="SSF52096">
    <property type="entry name" value="ClpP/crotonase"/>
    <property type="match status" value="1"/>
</dbReference>
<dbReference type="PROSITE" id="PS00382">
    <property type="entry name" value="CLP_PROTEASE_HIS"/>
    <property type="match status" value="1"/>
</dbReference>
<dbReference type="PROSITE" id="PS00381">
    <property type="entry name" value="CLP_PROTEASE_SER"/>
    <property type="match status" value="1"/>
</dbReference>
<accession>B9E685</accession>
<evidence type="ECO:0000255" key="1">
    <source>
        <dbReference type="HAMAP-Rule" id="MF_00444"/>
    </source>
</evidence>
<gene>
    <name evidence="1" type="primary">clpP</name>
    <name type="ordered locus">CKR_2959</name>
</gene>
<keyword id="KW-0963">Cytoplasm</keyword>
<keyword id="KW-0378">Hydrolase</keyword>
<keyword id="KW-0645">Protease</keyword>
<keyword id="KW-0720">Serine protease</keyword>
<organism>
    <name type="scientific">Clostridium kluyveri (strain NBRC 12016)</name>
    <dbReference type="NCBI Taxonomy" id="583346"/>
    <lineage>
        <taxon>Bacteria</taxon>
        <taxon>Bacillati</taxon>
        <taxon>Bacillota</taxon>
        <taxon>Clostridia</taxon>
        <taxon>Eubacteriales</taxon>
        <taxon>Clostridiaceae</taxon>
        <taxon>Clostridium</taxon>
    </lineage>
</organism>
<protein>
    <recommendedName>
        <fullName evidence="1">ATP-dependent Clp protease proteolytic subunit</fullName>
        <ecNumber evidence="1">3.4.21.92</ecNumber>
    </recommendedName>
    <alternativeName>
        <fullName evidence="1">Endopeptidase Clp</fullName>
    </alternativeName>
</protein>